<evidence type="ECO:0000255" key="1">
    <source>
        <dbReference type="HAMAP-Rule" id="MF_00127"/>
    </source>
</evidence>
<protein>
    <recommendedName>
        <fullName evidence="1">Histidine--tRNA ligase</fullName>
        <ecNumber evidence="1">6.1.1.21</ecNumber>
    </recommendedName>
    <alternativeName>
        <fullName evidence="1">Histidyl-tRNA synthetase</fullName>
        <shortName evidence="1">HisRS</shortName>
    </alternativeName>
</protein>
<keyword id="KW-0030">Aminoacyl-tRNA synthetase</keyword>
<keyword id="KW-0067">ATP-binding</keyword>
<keyword id="KW-0963">Cytoplasm</keyword>
<keyword id="KW-0436">Ligase</keyword>
<keyword id="KW-0547">Nucleotide-binding</keyword>
<keyword id="KW-0648">Protein biosynthesis</keyword>
<name>SYH_XYLF2</name>
<organism>
    <name type="scientific">Xylella fastidiosa (strain M23)</name>
    <dbReference type="NCBI Taxonomy" id="405441"/>
    <lineage>
        <taxon>Bacteria</taxon>
        <taxon>Pseudomonadati</taxon>
        <taxon>Pseudomonadota</taxon>
        <taxon>Gammaproteobacteria</taxon>
        <taxon>Lysobacterales</taxon>
        <taxon>Lysobacteraceae</taxon>
        <taxon>Xylella</taxon>
    </lineage>
</organism>
<dbReference type="EC" id="6.1.1.21" evidence="1"/>
<dbReference type="EMBL" id="CP001011">
    <property type="protein sequence ID" value="ACB92773.1"/>
    <property type="molecule type" value="Genomic_DNA"/>
</dbReference>
<dbReference type="RefSeq" id="WP_011098026.1">
    <property type="nucleotide sequence ID" value="NC_010577.1"/>
</dbReference>
<dbReference type="SMR" id="B2I5Y4"/>
<dbReference type="GeneID" id="93905081"/>
<dbReference type="KEGG" id="xfn:XfasM23_1355"/>
<dbReference type="HOGENOM" id="CLU_025113_3_0_6"/>
<dbReference type="Proteomes" id="UP000001698">
    <property type="component" value="Chromosome"/>
</dbReference>
<dbReference type="GO" id="GO:0005737">
    <property type="term" value="C:cytoplasm"/>
    <property type="evidence" value="ECO:0007669"/>
    <property type="project" value="UniProtKB-SubCell"/>
</dbReference>
<dbReference type="GO" id="GO:0005524">
    <property type="term" value="F:ATP binding"/>
    <property type="evidence" value="ECO:0007669"/>
    <property type="project" value="UniProtKB-UniRule"/>
</dbReference>
<dbReference type="GO" id="GO:0004821">
    <property type="term" value="F:histidine-tRNA ligase activity"/>
    <property type="evidence" value="ECO:0007669"/>
    <property type="project" value="UniProtKB-UniRule"/>
</dbReference>
<dbReference type="GO" id="GO:0006427">
    <property type="term" value="P:histidyl-tRNA aminoacylation"/>
    <property type="evidence" value="ECO:0007669"/>
    <property type="project" value="UniProtKB-UniRule"/>
</dbReference>
<dbReference type="CDD" id="cd00773">
    <property type="entry name" value="HisRS-like_core"/>
    <property type="match status" value="1"/>
</dbReference>
<dbReference type="CDD" id="cd00859">
    <property type="entry name" value="HisRS_anticodon"/>
    <property type="match status" value="1"/>
</dbReference>
<dbReference type="FunFam" id="3.40.50.800:FF:000027">
    <property type="entry name" value="Histidine--tRNA ligase"/>
    <property type="match status" value="1"/>
</dbReference>
<dbReference type="Gene3D" id="3.40.50.800">
    <property type="entry name" value="Anticodon-binding domain"/>
    <property type="match status" value="1"/>
</dbReference>
<dbReference type="Gene3D" id="3.30.930.10">
    <property type="entry name" value="Bira Bifunctional Protein, Domain 2"/>
    <property type="match status" value="1"/>
</dbReference>
<dbReference type="HAMAP" id="MF_00127">
    <property type="entry name" value="His_tRNA_synth"/>
    <property type="match status" value="1"/>
</dbReference>
<dbReference type="InterPro" id="IPR006195">
    <property type="entry name" value="aa-tRNA-synth_II"/>
</dbReference>
<dbReference type="InterPro" id="IPR045864">
    <property type="entry name" value="aa-tRNA-synth_II/BPL/LPL"/>
</dbReference>
<dbReference type="InterPro" id="IPR004154">
    <property type="entry name" value="Anticodon-bd"/>
</dbReference>
<dbReference type="InterPro" id="IPR036621">
    <property type="entry name" value="Anticodon-bd_dom_sf"/>
</dbReference>
<dbReference type="InterPro" id="IPR015807">
    <property type="entry name" value="His-tRNA-ligase"/>
</dbReference>
<dbReference type="InterPro" id="IPR041715">
    <property type="entry name" value="HisRS-like_core"/>
</dbReference>
<dbReference type="InterPro" id="IPR004516">
    <property type="entry name" value="HisRS/HisZ"/>
</dbReference>
<dbReference type="InterPro" id="IPR033656">
    <property type="entry name" value="HisRS_anticodon"/>
</dbReference>
<dbReference type="NCBIfam" id="TIGR00442">
    <property type="entry name" value="hisS"/>
    <property type="match status" value="1"/>
</dbReference>
<dbReference type="PANTHER" id="PTHR11476:SF7">
    <property type="entry name" value="HISTIDINE--TRNA LIGASE"/>
    <property type="match status" value="1"/>
</dbReference>
<dbReference type="PANTHER" id="PTHR11476">
    <property type="entry name" value="HISTIDYL-TRNA SYNTHETASE"/>
    <property type="match status" value="1"/>
</dbReference>
<dbReference type="Pfam" id="PF03129">
    <property type="entry name" value="HGTP_anticodon"/>
    <property type="match status" value="1"/>
</dbReference>
<dbReference type="Pfam" id="PF13393">
    <property type="entry name" value="tRNA-synt_His"/>
    <property type="match status" value="1"/>
</dbReference>
<dbReference type="PIRSF" id="PIRSF001549">
    <property type="entry name" value="His-tRNA_synth"/>
    <property type="match status" value="1"/>
</dbReference>
<dbReference type="SUPFAM" id="SSF52954">
    <property type="entry name" value="Class II aaRS ABD-related"/>
    <property type="match status" value="1"/>
</dbReference>
<dbReference type="SUPFAM" id="SSF55681">
    <property type="entry name" value="Class II aaRS and biotin synthetases"/>
    <property type="match status" value="1"/>
</dbReference>
<dbReference type="PROSITE" id="PS50862">
    <property type="entry name" value="AA_TRNA_LIGASE_II"/>
    <property type="match status" value="1"/>
</dbReference>
<proteinExistence type="inferred from homology"/>
<sequence>MIKPRTPPGVLELLPREQIAFQRMLDVIRRNYERFGFLPVETPVFELSDVLLTKSGGETERQVYFVQSTGTLANAAESGATRLPELALRFDLTVPLARYVAEYEHVLAFPFRRYQIQRVYRGERAQRGRFREFYQCDIDVIGKQTLSIRYDAEVLAVIHAVFSELGIGDFQVQLNNRKVLRGFLESQGVRDGELQLAVLREVDKLDKRGVLDVRDTLIGQGFGIPAAQVENILTFVATRSTSHADALARLDALIQDSGPEAHDMLRQGVAELREVLTLVNVLGVPEHAYRLNFSIARGLDYYTGTVYETALINHPQIGSICSGGRYENLANHYTQSKLPGVGISIGLTRLFWQLRDAGLIDGIAESSVQAMVVLMDEATLDDALDIARRLRIGGINTEVQMEAKKLSKQFQYASRAGIRFVVLAGDDERARGVVAVKDLTREQQFEIPREELASTLQVELEQAKVM</sequence>
<reference key="1">
    <citation type="journal article" date="2010" name="J. Bacteriol.">
        <title>Whole genome sequences of two Xylella fastidiosa strains (M12 and M23) causing almond leaf scorch disease in California.</title>
        <authorList>
            <person name="Chen J."/>
            <person name="Xie G."/>
            <person name="Han S."/>
            <person name="Chertkov O."/>
            <person name="Sims D."/>
            <person name="Civerolo E.L."/>
        </authorList>
    </citation>
    <scope>NUCLEOTIDE SEQUENCE [LARGE SCALE GENOMIC DNA]</scope>
    <source>
        <strain>M23</strain>
    </source>
</reference>
<accession>B2I5Y4</accession>
<comment type="catalytic activity">
    <reaction evidence="1">
        <text>tRNA(His) + L-histidine + ATP = L-histidyl-tRNA(His) + AMP + diphosphate + H(+)</text>
        <dbReference type="Rhea" id="RHEA:17313"/>
        <dbReference type="Rhea" id="RHEA-COMP:9665"/>
        <dbReference type="Rhea" id="RHEA-COMP:9689"/>
        <dbReference type="ChEBI" id="CHEBI:15378"/>
        <dbReference type="ChEBI" id="CHEBI:30616"/>
        <dbReference type="ChEBI" id="CHEBI:33019"/>
        <dbReference type="ChEBI" id="CHEBI:57595"/>
        <dbReference type="ChEBI" id="CHEBI:78442"/>
        <dbReference type="ChEBI" id="CHEBI:78527"/>
        <dbReference type="ChEBI" id="CHEBI:456215"/>
        <dbReference type="EC" id="6.1.1.21"/>
    </reaction>
</comment>
<comment type="subunit">
    <text evidence="1">Homodimer.</text>
</comment>
<comment type="subcellular location">
    <subcellularLocation>
        <location evidence="1">Cytoplasm</location>
    </subcellularLocation>
</comment>
<comment type="similarity">
    <text evidence="1">Belongs to the class-II aminoacyl-tRNA synthetase family.</text>
</comment>
<gene>
    <name evidence="1" type="primary">hisS</name>
    <name type="ordered locus">XfasM23_1355</name>
</gene>
<feature type="chain" id="PRO_1000095613" description="Histidine--tRNA ligase">
    <location>
        <begin position="1"/>
        <end position="466"/>
    </location>
</feature>